<sequence length="287" mass="32963">MFPYYPLRLLKSLQLLVWASVLLALTFIFSIFSISVTNVLSISFLRIPFALFGWIFGPIWGFIFGFLSDTIDWLTKGYVWFWMFALQKPLFAFLAGIVKGIYLVRKNASNYKVDFWVLQTLLVTFFVVSVTLLLLYLTNNEFQQIGTKNFQTADLSVNVVVLQIITLVSFVIFFLVTEGFLGFVYVKKRNKEQALLTIYSLVLMVLMSVVVSILLGTIAAIEFITFINNGRPSNNFVLYGVYFFLLPRVLVQALLLPIYVALFYPLIGIVENNLKNYLLLFTLSWKS</sequence>
<feature type="chain" id="PRO_0000210526" description="Uncharacterized protein MG313">
    <location>
        <begin position="1"/>
        <end position="287"/>
    </location>
</feature>
<organism>
    <name type="scientific">Mycoplasma genitalium (strain ATCC 33530 / DSM 19775 / NCTC 10195 / G37)</name>
    <name type="common">Mycoplasmoides genitalium</name>
    <dbReference type="NCBI Taxonomy" id="243273"/>
    <lineage>
        <taxon>Bacteria</taxon>
        <taxon>Bacillati</taxon>
        <taxon>Mycoplasmatota</taxon>
        <taxon>Mycoplasmoidales</taxon>
        <taxon>Mycoplasmoidaceae</taxon>
        <taxon>Mycoplasmoides</taxon>
    </lineage>
</organism>
<reference key="1">
    <citation type="journal article" date="1995" name="Science">
        <title>The minimal gene complement of Mycoplasma genitalium.</title>
        <authorList>
            <person name="Fraser C.M."/>
            <person name="Gocayne J.D."/>
            <person name="White O."/>
            <person name="Adams M.D."/>
            <person name="Clayton R.A."/>
            <person name="Fleischmann R.D."/>
            <person name="Bult C.J."/>
            <person name="Kerlavage A.R."/>
            <person name="Sutton G.G."/>
            <person name="Kelley J.M."/>
            <person name="Fritchman J.L."/>
            <person name="Weidman J.F."/>
            <person name="Small K.V."/>
            <person name="Sandusky M."/>
            <person name="Fuhrmann J.L."/>
            <person name="Nguyen D.T."/>
            <person name="Utterback T.R."/>
            <person name="Saudek D.M."/>
            <person name="Phillips C.A."/>
            <person name="Merrick J.M."/>
            <person name="Tomb J.-F."/>
            <person name="Dougherty B.A."/>
            <person name="Bott K.F."/>
            <person name="Hu P.-C."/>
            <person name="Lucier T.S."/>
            <person name="Peterson S.N."/>
            <person name="Smith H.O."/>
            <person name="Hutchison C.A. III"/>
            <person name="Venter J.C."/>
        </authorList>
    </citation>
    <scope>NUCLEOTIDE SEQUENCE [LARGE SCALE GENOMIC DNA]</scope>
    <source>
        <strain>ATCC 33530 / DSM 19775 / NCTC 10195 / G37</strain>
    </source>
</reference>
<dbReference type="EMBL" id="L43967">
    <property type="protein sequence ID" value="AAC71535.1"/>
    <property type="molecule type" value="Genomic_DNA"/>
</dbReference>
<dbReference type="RefSeq" id="WP_010869425.1">
    <property type="nucleotide sequence ID" value="NC_000908.2"/>
</dbReference>
<dbReference type="STRING" id="243273.MG_313"/>
<dbReference type="GeneID" id="88282476"/>
<dbReference type="KEGG" id="mge:MG_313"/>
<dbReference type="eggNOG" id="ENOG50340U9">
    <property type="taxonomic scope" value="Bacteria"/>
</dbReference>
<dbReference type="HOGENOM" id="CLU_917724_0_0_14"/>
<dbReference type="InParanoid" id="Q49414"/>
<dbReference type="Proteomes" id="UP000000807">
    <property type="component" value="Chromosome"/>
</dbReference>
<dbReference type="GO" id="GO:0022857">
    <property type="term" value="F:transmembrane transporter activity"/>
    <property type="evidence" value="ECO:0007669"/>
    <property type="project" value="InterPro"/>
</dbReference>
<dbReference type="Gene3D" id="1.10.1760.20">
    <property type="match status" value="1"/>
</dbReference>
<dbReference type="InterPro" id="IPR024529">
    <property type="entry name" value="ECF_trnsprt_substrate-spec"/>
</dbReference>
<dbReference type="Pfam" id="PF12822">
    <property type="entry name" value="ECF_trnsprt"/>
    <property type="match status" value="1"/>
</dbReference>
<keyword id="KW-1185">Reference proteome</keyword>
<accession>Q49414</accession>
<name>Y313_MYCGE</name>
<gene>
    <name type="ordered locus">MG313</name>
</gene>
<protein>
    <recommendedName>
        <fullName>Uncharacterized protein MG313</fullName>
    </recommendedName>
</protein>
<proteinExistence type="predicted"/>